<proteinExistence type="evidence at protein level"/>
<keyword id="KW-0158">Chromosome</keyword>
<keyword id="KW-0963">Cytoplasm</keyword>
<keyword id="KW-0903">Direct protein sequencing</keyword>
<keyword id="KW-0238">DNA-binding</keyword>
<evidence type="ECO:0000250" key="1">
    <source>
        <dbReference type="UniProtKB" id="P19267"/>
    </source>
</evidence>
<evidence type="ECO:0000269" key="2">
    <source>
    </source>
</evidence>
<evidence type="ECO:0000305" key="3"/>
<protein>
    <recommendedName>
        <fullName>Archaeal histone HAN1 subunit A</fullName>
    </recommendedName>
</protein>
<comment type="function">
    <text evidence="2">Binds and compact DNA (95 to 150 base pairs) to form nucleosome-like structures that contain positive DNA supercoils. Increases the resistance of DNA to thermal denaturation (in vitro).</text>
</comment>
<comment type="subunit">
    <text evidence="1 2">Heterodimer (PubMed:8861206). Dimers then assemble into higher oligomers, with the DNA wrapped around the protein core (By similarity).</text>
</comment>
<comment type="subcellular location">
    <subcellularLocation>
        <location evidence="3">Cytoplasm</location>
    </subcellularLocation>
    <subcellularLocation>
        <location evidence="3">Chromosome</location>
    </subcellularLocation>
</comment>
<comment type="similarity">
    <text evidence="3">Belongs to the archaeal histone HMF family.</text>
</comment>
<accession>P95669</accession>
<accession>O08124</accession>
<name>HANA_THEZI</name>
<reference key="1">
    <citation type="journal article" date="1996" name="Biochim. Biophys. Acta">
        <title>A gene, han1A, encoding an archaeal histone-like protein from the Thermococcus species AN1: homology with eukaryal histone consensus sequences and the implications for delineation of the histone fold.</title>
        <authorList>
            <person name="Ronimus R.S."/>
            <person name="Musgrave D.R."/>
        </authorList>
    </citation>
    <scope>NUCLEOTIDE SEQUENCE [GENOMIC DNA]</scope>
    <source>
        <strain>AN1</strain>
    </source>
</reference>
<reference key="2">
    <citation type="journal article" date="1996" name="Mol. Microbiol.">
        <title>Purification and characterization of a histone-like protein from the Archaeal isolate AN1, a member of the Thermococcales.</title>
        <authorList>
            <person name="Ronimus R.S."/>
            <person name="Musgrave D.R."/>
        </authorList>
    </citation>
    <scope>PARTIAL PROTEIN SEQUENCE</scope>
    <scope>FUNCTION</scope>
    <scope>SUBUNIT</scope>
    <source>
        <strain>AN1</strain>
    </source>
</reference>
<dbReference type="EMBL" id="U93078">
    <property type="protein sequence ID" value="AAB53861.1"/>
    <property type="molecule type" value="Genomic_DNA"/>
</dbReference>
<dbReference type="PIR" id="S71485">
    <property type="entry name" value="S71485"/>
</dbReference>
<dbReference type="SMR" id="P95669"/>
<dbReference type="GO" id="GO:0005694">
    <property type="term" value="C:chromosome"/>
    <property type="evidence" value="ECO:0007669"/>
    <property type="project" value="UniProtKB-SubCell"/>
</dbReference>
<dbReference type="GO" id="GO:0005737">
    <property type="term" value="C:cytoplasm"/>
    <property type="evidence" value="ECO:0007669"/>
    <property type="project" value="UniProtKB-SubCell"/>
</dbReference>
<dbReference type="GO" id="GO:0003677">
    <property type="term" value="F:DNA binding"/>
    <property type="evidence" value="ECO:0007669"/>
    <property type="project" value="UniProtKB-KW"/>
</dbReference>
<dbReference type="GO" id="GO:0046982">
    <property type="term" value="F:protein heterodimerization activity"/>
    <property type="evidence" value="ECO:0007669"/>
    <property type="project" value="InterPro"/>
</dbReference>
<dbReference type="CDD" id="cd22909">
    <property type="entry name" value="HFD_archaea_histone-like"/>
    <property type="match status" value="1"/>
</dbReference>
<dbReference type="Gene3D" id="1.10.20.10">
    <property type="entry name" value="Histone, subunit A"/>
    <property type="match status" value="1"/>
</dbReference>
<dbReference type="InterPro" id="IPR050947">
    <property type="entry name" value="Archaeal_histone_HMF"/>
</dbReference>
<dbReference type="InterPro" id="IPR003958">
    <property type="entry name" value="CBFA_NFYB_domain"/>
</dbReference>
<dbReference type="InterPro" id="IPR009072">
    <property type="entry name" value="Histone-fold"/>
</dbReference>
<dbReference type="InterPro" id="IPR050004">
    <property type="entry name" value="HmfB-like"/>
</dbReference>
<dbReference type="NCBIfam" id="NF043032">
    <property type="entry name" value="archaea_histone"/>
    <property type="match status" value="1"/>
</dbReference>
<dbReference type="PANTHER" id="PTHR47828">
    <property type="entry name" value="ARCHAEAL HISTONE A"/>
    <property type="match status" value="1"/>
</dbReference>
<dbReference type="PANTHER" id="PTHR47828:SF1">
    <property type="entry name" value="ARCHAEAL HISTONE A"/>
    <property type="match status" value="1"/>
</dbReference>
<dbReference type="Pfam" id="PF00808">
    <property type="entry name" value="CBFD_NFYB_HMF"/>
    <property type="match status" value="1"/>
</dbReference>
<dbReference type="SUPFAM" id="SSF47113">
    <property type="entry name" value="Histone-fold"/>
    <property type="match status" value="1"/>
</dbReference>
<gene>
    <name type="primary">han1A</name>
</gene>
<sequence>MAELPIAPIDRLIRKAGAERVSEDAAKALAEYLEEYAIEVGKKATEFARHAGRKTVKAEDVRLAVKA</sequence>
<feature type="initiator methionine" description="Removed">
    <location>
        <position position="1"/>
    </location>
</feature>
<feature type="chain" id="PRO_0000155004" description="Archaeal histone HAN1 subunit A">
    <location>
        <begin position="2"/>
        <end position="67"/>
    </location>
</feature>
<feature type="region of interest" description="Interaction with DNA" evidence="1">
    <location>
        <begin position="20"/>
        <end position="22"/>
    </location>
</feature>
<feature type="region of interest" description="Interaction with DNA" evidence="1">
    <location>
        <begin position="54"/>
        <end position="57"/>
    </location>
</feature>
<organism>
    <name type="scientific">Thermococcus zilligii</name>
    <dbReference type="NCBI Taxonomy" id="54076"/>
    <lineage>
        <taxon>Archaea</taxon>
        <taxon>Methanobacteriati</taxon>
        <taxon>Methanobacteriota</taxon>
        <taxon>Thermococci</taxon>
        <taxon>Thermococcales</taxon>
        <taxon>Thermococcaceae</taxon>
        <taxon>Thermococcus</taxon>
    </lineage>
</organism>